<protein>
    <recommendedName>
        <fullName evidence="1">Glycine--tRNA ligase beta subunit</fullName>
        <ecNumber evidence="1">6.1.1.14</ecNumber>
    </recommendedName>
    <alternativeName>
        <fullName evidence="1">Glycyl-tRNA synthetase beta subunit</fullName>
        <shortName evidence="1">GlyRS</shortName>
    </alternativeName>
</protein>
<accession>A8AVS5</accession>
<feature type="chain" id="PRO_1000101346" description="Glycine--tRNA ligase beta subunit">
    <location>
        <begin position="1"/>
        <end position="679"/>
    </location>
</feature>
<keyword id="KW-0030">Aminoacyl-tRNA synthetase</keyword>
<keyword id="KW-0067">ATP-binding</keyword>
<keyword id="KW-0963">Cytoplasm</keyword>
<keyword id="KW-0436">Ligase</keyword>
<keyword id="KW-0547">Nucleotide-binding</keyword>
<keyword id="KW-0648">Protein biosynthesis</keyword>
<keyword id="KW-1185">Reference proteome</keyword>
<comment type="catalytic activity">
    <reaction evidence="1">
        <text>tRNA(Gly) + glycine + ATP = glycyl-tRNA(Gly) + AMP + diphosphate</text>
        <dbReference type="Rhea" id="RHEA:16013"/>
        <dbReference type="Rhea" id="RHEA-COMP:9664"/>
        <dbReference type="Rhea" id="RHEA-COMP:9683"/>
        <dbReference type="ChEBI" id="CHEBI:30616"/>
        <dbReference type="ChEBI" id="CHEBI:33019"/>
        <dbReference type="ChEBI" id="CHEBI:57305"/>
        <dbReference type="ChEBI" id="CHEBI:78442"/>
        <dbReference type="ChEBI" id="CHEBI:78522"/>
        <dbReference type="ChEBI" id="CHEBI:456215"/>
        <dbReference type="EC" id="6.1.1.14"/>
    </reaction>
</comment>
<comment type="subunit">
    <text evidence="1">Tetramer of two alpha and two beta subunits.</text>
</comment>
<comment type="subcellular location">
    <subcellularLocation>
        <location evidence="1">Cytoplasm</location>
    </subcellularLocation>
</comment>
<comment type="similarity">
    <text evidence="1">Belongs to the class-II aminoacyl-tRNA synthetase family.</text>
</comment>
<evidence type="ECO:0000255" key="1">
    <source>
        <dbReference type="HAMAP-Rule" id="MF_00255"/>
    </source>
</evidence>
<gene>
    <name evidence="1" type="primary">glyS</name>
    <name type="ordered locus">SGO_0569</name>
</gene>
<sequence>MVKNLLVELGLEEMPAYVVTPSMKQLRDKMGAFLTDHRLTFEKIEMFSTPRRLAVRVVGLADKQSDLTEDFKGPSKKIALDADGNFTKAAEGFVRGKGLTVEDITFREIKGEEYVYVTKEEIGRPVEEIIPAVTEVLQALTFPVSMHWANNTFEYIRPVHTLTVLLDEQAFDLDFLDIKSGRTSRGHRFLGQETEIASADSYEDDLRAQFVIASPLERGDMIVDQIQALEEEHGVSIEIDEDLLNEVLNLVEYPTAFLGNFDAKYLEVPEEVLVTSMKEHQRYFVVRDSEGKLLPHFISVRNGNAEHLENVIKGNEKVLVARLEDGEFFWREDQKLAIADLVEKLNNVTFHEKIGSLAEHMERTGKIAALLAQEAGLDADETADLARAAAIYKFDLLTGMVGEFDELQGIMGEKYALLAGENAAVAAAIREHYMPTSADGELPDTKVGAVLALADKLDTILSFFSVGLIPSGSNDPYALRRATQGVVRILDKFGWNIDLAQLLGRLYELKFDSLSYDNQEAVLDFFRARVEKMMDRSIPKDIVTAVLQSTHFVVRDLVETAALLAEKAQEDNFKSAVESLSRVFNLAEKAQGQTAVNPALFENKEEKDLAAAIEKVVLTSDLAANLDQFFALSPVIDAFFDHTMVMAEDEAVRNNRLALLASLTAKAGQIAQFNQINTK</sequence>
<name>SYGB_STRGC</name>
<reference key="1">
    <citation type="journal article" date="2007" name="J. Bacteriol.">
        <title>Genome-wide transcriptional changes in Streptococcus gordonii in response to competence signaling peptide.</title>
        <authorList>
            <person name="Vickerman M.M."/>
            <person name="Iobst S."/>
            <person name="Jesionowski A.M."/>
            <person name="Gill S.R."/>
        </authorList>
    </citation>
    <scope>NUCLEOTIDE SEQUENCE [LARGE SCALE GENOMIC DNA]</scope>
    <source>
        <strain>Challis / ATCC 35105 / BCRC 15272 / CH1 / DL1 / V288</strain>
    </source>
</reference>
<dbReference type="EC" id="6.1.1.14" evidence="1"/>
<dbReference type="EMBL" id="CP000725">
    <property type="protein sequence ID" value="ABV10025.1"/>
    <property type="molecule type" value="Genomic_DNA"/>
</dbReference>
<dbReference type="RefSeq" id="WP_012000066.1">
    <property type="nucleotide sequence ID" value="NC_009785.1"/>
</dbReference>
<dbReference type="SMR" id="A8AVS5"/>
<dbReference type="STRING" id="467705.SGO_0569"/>
<dbReference type="KEGG" id="sgo:SGO_0569"/>
<dbReference type="eggNOG" id="COG0751">
    <property type="taxonomic scope" value="Bacteria"/>
</dbReference>
<dbReference type="HOGENOM" id="CLU_007220_2_2_9"/>
<dbReference type="Proteomes" id="UP000001131">
    <property type="component" value="Chromosome"/>
</dbReference>
<dbReference type="GO" id="GO:0005829">
    <property type="term" value="C:cytosol"/>
    <property type="evidence" value="ECO:0007669"/>
    <property type="project" value="TreeGrafter"/>
</dbReference>
<dbReference type="GO" id="GO:0004814">
    <property type="term" value="F:arginine-tRNA ligase activity"/>
    <property type="evidence" value="ECO:0007669"/>
    <property type="project" value="InterPro"/>
</dbReference>
<dbReference type="GO" id="GO:0005524">
    <property type="term" value="F:ATP binding"/>
    <property type="evidence" value="ECO:0007669"/>
    <property type="project" value="UniProtKB-UniRule"/>
</dbReference>
<dbReference type="GO" id="GO:0004820">
    <property type="term" value="F:glycine-tRNA ligase activity"/>
    <property type="evidence" value="ECO:0007669"/>
    <property type="project" value="UniProtKB-UniRule"/>
</dbReference>
<dbReference type="GO" id="GO:0006420">
    <property type="term" value="P:arginyl-tRNA aminoacylation"/>
    <property type="evidence" value="ECO:0007669"/>
    <property type="project" value="InterPro"/>
</dbReference>
<dbReference type="GO" id="GO:0006426">
    <property type="term" value="P:glycyl-tRNA aminoacylation"/>
    <property type="evidence" value="ECO:0007669"/>
    <property type="project" value="UniProtKB-UniRule"/>
</dbReference>
<dbReference type="HAMAP" id="MF_00255">
    <property type="entry name" value="Gly_tRNA_synth_beta"/>
    <property type="match status" value="1"/>
</dbReference>
<dbReference type="InterPro" id="IPR008909">
    <property type="entry name" value="DALR_anticod-bd"/>
</dbReference>
<dbReference type="InterPro" id="IPR015944">
    <property type="entry name" value="Gly-tRNA-synth_bsu"/>
</dbReference>
<dbReference type="InterPro" id="IPR006194">
    <property type="entry name" value="Gly-tRNA-synth_heterodimer"/>
</dbReference>
<dbReference type="NCBIfam" id="TIGR00211">
    <property type="entry name" value="glyS"/>
    <property type="match status" value="1"/>
</dbReference>
<dbReference type="PANTHER" id="PTHR30075:SF2">
    <property type="entry name" value="GLYCINE--TRNA LIGASE, CHLOROPLASTIC_MITOCHONDRIAL 2"/>
    <property type="match status" value="1"/>
</dbReference>
<dbReference type="PANTHER" id="PTHR30075">
    <property type="entry name" value="GLYCYL-TRNA SYNTHETASE"/>
    <property type="match status" value="1"/>
</dbReference>
<dbReference type="Pfam" id="PF05746">
    <property type="entry name" value="DALR_1"/>
    <property type="match status" value="1"/>
</dbReference>
<dbReference type="Pfam" id="PF02092">
    <property type="entry name" value="tRNA_synt_2f"/>
    <property type="match status" value="1"/>
</dbReference>
<dbReference type="PRINTS" id="PR01045">
    <property type="entry name" value="TRNASYNTHGB"/>
</dbReference>
<dbReference type="SUPFAM" id="SSF109604">
    <property type="entry name" value="HD-domain/PDEase-like"/>
    <property type="match status" value="1"/>
</dbReference>
<dbReference type="PROSITE" id="PS50861">
    <property type="entry name" value="AA_TRNA_LIGASE_II_GLYAB"/>
    <property type="match status" value="1"/>
</dbReference>
<organism>
    <name type="scientific">Streptococcus gordonii (strain Challis / ATCC 35105 / BCRC 15272 / CH1 / DL1 / V288)</name>
    <dbReference type="NCBI Taxonomy" id="467705"/>
    <lineage>
        <taxon>Bacteria</taxon>
        <taxon>Bacillati</taxon>
        <taxon>Bacillota</taxon>
        <taxon>Bacilli</taxon>
        <taxon>Lactobacillales</taxon>
        <taxon>Streptococcaceae</taxon>
        <taxon>Streptococcus</taxon>
    </lineage>
</organism>
<proteinExistence type="inferred from homology"/>